<accession>Q31IT2</accession>
<sequence length="96" mass="10300">MNIKPLHDRVVVRQVEEQKESTGGILLPGSAQEKENLGEVVAVGPGKAADNGSIIPMTVKVGDKVMFGQYSGQEVKDDAGKPLKVMREDDIIAIVE</sequence>
<organism>
    <name type="scientific">Hydrogenovibrio crunogenus (strain DSM 25203 / XCL-2)</name>
    <name type="common">Thiomicrospira crunogena</name>
    <dbReference type="NCBI Taxonomy" id="317025"/>
    <lineage>
        <taxon>Bacteria</taxon>
        <taxon>Pseudomonadati</taxon>
        <taxon>Pseudomonadota</taxon>
        <taxon>Gammaproteobacteria</taxon>
        <taxon>Thiotrichales</taxon>
        <taxon>Piscirickettsiaceae</taxon>
        <taxon>Hydrogenovibrio</taxon>
    </lineage>
</organism>
<dbReference type="EMBL" id="CP000109">
    <property type="protein sequence ID" value="ABB40941.1"/>
    <property type="molecule type" value="Genomic_DNA"/>
</dbReference>
<dbReference type="SMR" id="Q31IT2"/>
<dbReference type="STRING" id="317025.Tcr_0345"/>
<dbReference type="KEGG" id="tcx:Tcr_0345"/>
<dbReference type="eggNOG" id="COG0234">
    <property type="taxonomic scope" value="Bacteria"/>
</dbReference>
<dbReference type="HOGENOM" id="CLU_132825_2_0_6"/>
<dbReference type="OrthoDB" id="9806791at2"/>
<dbReference type="GO" id="GO:0005737">
    <property type="term" value="C:cytoplasm"/>
    <property type="evidence" value="ECO:0007669"/>
    <property type="project" value="UniProtKB-SubCell"/>
</dbReference>
<dbReference type="GO" id="GO:0005524">
    <property type="term" value="F:ATP binding"/>
    <property type="evidence" value="ECO:0007669"/>
    <property type="project" value="InterPro"/>
</dbReference>
<dbReference type="GO" id="GO:0046872">
    <property type="term" value="F:metal ion binding"/>
    <property type="evidence" value="ECO:0007669"/>
    <property type="project" value="TreeGrafter"/>
</dbReference>
<dbReference type="GO" id="GO:0044183">
    <property type="term" value="F:protein folding chaperone"/>
    <property type="evidence" value="ECO:0007669"/>
    <property type="project" value="InterPro"/>
</dbReference>
<dbReference type="GO" id="GO:0051087">
    <property type="term" value="F:protein-folding chaperone binding"/>
    <property type="evidence" value="ECO:0007669"/>
    <property type="project" value="TreeGrafter"/>
</dbReference>
<dbReference type="GO" id="GO:0051082">
    <property type="term" value="F:unfolded protein binding"/>
    <property type="evidence" value="ECO:0007669"/>
    <property type="project" value="TreeGrafter"/>
</dbReference>
<dbReference type="GO" id="GO:0051085">
    <property type="term" value="P:chaperone cofactor-dependent protein refolding"/>
    <property type="evidence" value="ECO:0007669"/>
    <property type="project" value="TreeGrafter"/>
</dbReference>
<dbReference type="CDD" id="cd00320">
    <property type="entry name" value="cpn10"/>
    <property type="match status" value="1"/>
</dbReference>
<dbReference type="FunFam" id="2.30.33.40:FF:000001">
    <property type="entry name" value="10 kDa chaperonin"/>
    <property type="match status" value="1"/>
</dbReference>
<dbReference type="Gene3D" id="2.30.33.40">
    <property type="entry name" value="GroES chaperonin"/>
    <property type="match status" value="1"/>
</dbReference>
<dbReference type="HAMAP" id="MF_00580">
    <property type="entry name" value="CH10"/>
    <property type="match status" value="1"/>
</dbReference>
<dbReference type="InterPro" id="IPR020818">
    <property type="entry name" value="Chaperonin_GroES"/>
</dbReference>
<dbReference type="InterPro" id="IPR037124">
    <property type="entry name" value="Chaperonin_GroES_sf"/>
</dbReference>
<dbReference type="InterPro" id="IPR018369">
    <property type="entry name" value="Chaprnonin_Cpn10_CS"/>
</dbReference>
<dbReference type="InterPro" id="IPR011032">
    <property type="entry name" value="GroES-like_sf"/>
</dbReference>
<dbReference type="NCBIfam" id="NF001527">
    <property type="entry name" value="PRK00364.1-2"/>
    <property type="match status" value="1"/>
</dbReference>
<dbReference type="NCBIfam" id="NF001531">
    <property type="entry name" value="PRK00364.2-2"/>
    <property type="match status" value="1"/>
</dbReference>
<dbReference type="NCBIfam" id="NF001533">
    <property type="entry name" value="PRK00364.2-4"/>
    <property type="match status" value="1"/>
</dbReference>
<dbReference type="PANTHER" id="PTHR10772">
    <property type="entry name" value="10 KDA HEAT SHOCK PROTEIN"/>
    <property type="match status" value="1"/>
</dbReference>
<dbReference type="PANTHER" id="PTHR10772:SF58">
    <property type="entry name" value="CO-CHAPERONIN GROES"/>
    <property type="match status" value="1"/>
</dbReference>
<dbReference type="Pfam" id="PF00166">
    <property type="entry name" value="Cpn10"/>
    <property type="match status" value="1"/>
</dbReference>
<dbReference type="PRINTS" id="PR00297">
    <property type="entry name" value="CHAPERONIN10"/>
</dbReference>
<dbReference type="SMART" id="SM00883">
    <property type="entry name" value="Cpn10"/>
    <property type="match status" value="1"/>
</dbReference>
<dbReference type="SUPFAM" id="SSF50129">
    <property type="entry name" value="GroES-like"/>
    <property type="match status" value="1"/>
</dbReference>
<dbReference type="PROSITE" id="PS00681">
    <property type="entry name" value="CHAPERONINS_CPN10"/>
    <property type="match status" value="1"/>
</dbReference>
<feature type="chain" id="PRO_1000025394" description="Co-chaperonin GroES">
    <location>
        <begin position="1"/>
        <end position="96"/>
    </location>
</feature>
<keyword id="KW-0143">Chaperone</keyword>
<keyword id="KW-0963">Cytoplasm</keyword>
<proteinExistence type="inferred from homology"/>
<reference key="1">
    <citation type="journal article" date="2006" name="PLoS Biol.">
        <title>The genome of deep-sea vent chemolithoautotroph Thiomicrospira crunogena XCL-2.</title>
        <authorList>
            <person name="Scott K.M."/>
            <person name="Sievert S.M."/>
            <person name="Abril F.N."/>
            <person name="Ball L.A."/>
            <person name="Barrett C.J."/>
            <person name="Blake R.A."/>
            <person name="Boller A.J."/>
            <person name="Chain P.S.G."/>
            <person name="Clark J.A."/>
            <person name="Davis C.R."/>
            <person name="Detter C."/>
            <person name="Do K.F."/>
            <person name="Dobrinski K.P."/>
            <person name="Faza B.I."/>
            <person name="Fitzpatrick K.A."/>
            <person name="Freyermuth S.K."/>
            <person name="Harmer T.L."/>
            <person name="Hauser L.J."/>
            <person name="Huegler M."/>
            <person name="Kerfeld C.A."/>
            <person name="Klotz M.G."/>
            <person name="Kong W.W."/>
            <person name="Land M."/>
            <person name="Lapidus A."/>
            <person name="Larimer F.W."/>
            <person name="Longo D.L."/>
            <person name="Lucas S."/>
            <person name="Malfatti S.A."/>
            <person name="Massey S.E."/>
            <person name="Martin D.D."/>
            <person name="McCuddin Z."/>
            <person name="Meyer F."/>
            <person name="Moore J.L."/>
            <person name="Ocampo L.H. Jr."/>
            <person name="Paul J.H."/>
            <person name="Paulsen I.T."/>
            <person name="Reep D.K."/>
            <person name="Ren Q."/>
            <person name="Ross R.L."/>
            <person name="Sato P.Y."/>
            <person name="Thomas P."/>
            <person name="Tinkham L.E."/>
            <person name="Zeruth G.T."/>
        </authorList>
    </citation>
    <scope>NUCLEOTIDE SEQUENCE [LARGE SCALE GENOMIC DNA]</scope>
    <source>
        <strain>DSM 25203 / XCL-2</strain>
    </source>
</reference>
<protein>
    <recommendedName>
        <fullName evidence="1">Co-chaperonin GroES</fullName>
    </recommendedName>
    <alternativeName>
        <fullName evidence="1">10 kDa chaperonin</fullName>
    </alternativeName>
    <alternativeName>
        <fullName evidence="1">Chaperonin-10</fullName>
        <shortName evidence="1">Cpn10</shortName>
    </alternativeName>
</protein>
<evidence type="ECO:0000255" key="1">
    <source>
        <dbReference type="HAMAP-Rule" id="MF_00580"/>
    </source>
</evidence>
<name>CH10_HYDCU</name>
<comment type="function">
    <text evidence="1">Together with the chaperonin GroEL, plays an essential role in assisting protein folding. The GroEL-GroES system forms a nano-cage that allows encapsulation of the non-native substrate proteins and provides a physical environment optimized to promote and accelerate protein folding. GroES binds to the apical surface of the GroEL ring, thereby capping the opening of the GroEL channel.</text>
</comment>
<comment type="subunit">
    <text evidence="1">Heptamer of 7 subunits arranged in a ring. Interacts with the chaperonin GroEL.</text>
</comment>
<comment type="subcellular location">
    <subcellularLocation>
        <location evidence="1">Cytoplasm</location>
    </subcellularLocation>
</comment>
<comment type="similarity">
    <text evidence="1">Belongs to the GroES chaperonin family.</text>
</comment>
<gene>
    <name evidence="1" type="primary">groES</name>
    <name evidence="1" type="synonym">groS</name>
    <name type="ordered locus">Tcr_0345</name>
</gene>